<gene>
    <name type="primary">Thoc2</name>
</gene>
<organism>
    <name type="scientific">Mus musculus</name>
    <name type="common">Mouse</name>
    <dbReference type="NCBI Taxonomy" id="10090"/>
    <lineage>
        <taxon>Eukaryota</taxon>
        <taxon>Metazoa</taxon>
        <taxon>Chordata</taxon>
        <taxon>Craniata</taxon>
        <taxon>Vertebrata</taxon>
        <taxon>Euteleostomi</taxon>
        <taxon>Mammalia</taxon>
        <taxon>Eutheria</taxon>
        <taxon>Euarchontoglires</taxon>
        <taxon>Glires</taxon>
        <taxon>Rodentia</taxon>
        <taxon>Myomorpha</taxon>
        <taxon>Muroidea</taxon>
        <taxon>Muridae</taxon>
        <taxon>Murinae</taxon>
        <taxon>Mus</taxon>
        <taxon>Mus</taxon>
    </lineage>
</organism>
<evidence type="ECO:0000250" key="1">
    <source>
        <dbReference type="UniProtKB" id="Q8NI27"/>
    </source>
</evidence>
<evidence type="ECO:0000255" key="2"/>
<evidence type="ECO:0000256" key="3">
    <source>
        <dbReference type="SAM" id="MobiDB-lite"/>
    </source>
</evidence>
<evidence type="ECO:0000269" key="4">
    <source>
    </source>
</evidence>
<evidence type="ECO:0000269" key="5">
    <source>
    </source>
</evidence>
<evidence type="ECO:0000305" key="6"/>
<evidence type="ECO:0007744" key="7">
    <source>
    </source>
</evidence>
<keyword id="KW-0175">Coiled coil</keyword>
<keyword id="KW-0963">Cytoplasm</keyword>
<keyword id="KW-0507">mRNA processing</keyword>
<keyword id="KW-0508">mRNA splicing</keyword>
<keyword id="KW-0509">mRNA transport</keyword>
<keyword id="KW-0539">Nucleus</keyword>
<keyword id="KW-0597">Phosphoprotein</keyword>
<keyword id="KW-1185">Reference proteome</keyword>
<keyword id="KW-0694">RNA-binding</keyword>
<keyword id="KW-0813">Transport</keyword>
<accession>B1AZI6</accession>
<name>THOC2_MOUSE</name>
<sequence length="1594" mass="182773">MAAAAVVVPAEWIKNWEKSGRGEFLHLCRILSENKSHDSSTYRDFQQALYELSYHVIKGNLKHEQASSVLNDISEFREDMPSILADVFCILDIETNCLEEKSKRDYFTQLVLACLYLVSDTVLKERLDPETLESLGLIKQSQQFNQKSVKIKTKLFYKQQKFNLLREENEGYAKLIAELGQDLSGNITSDLILENIKSLIGCFNLDPNRVLDVILEVFECRPEHDDFFISLLESYMSMCEPQTLCHILGFKFKFYQEPSGETPSSLYRVAAVLLQFNLIDLDDLYVHLLPADNCIMDEYKREIVEAKQIVRKLTMVVLSSEKLDERDKEKDKDDEKVEKPPDNQKLGLLEALLKVGDWQHAQNIMDQMPPYYAASHKLIALAICKLIHITVEPLYRRVGVPKGAKGSPVSALQNKRAPKQVESFEDLRRDVFNMFCYLGPHLSHDPILFAKVVRIGKSFMKEFQSDGSKQEDKEKTEVILSCLLSITDQVLLPSLSLMDCNACMSEELWGMFKTFPYQHRYRLYGQWKNETYNGHPLLVKVKAQTIDRAKYIMKRLTKENVKPSGRQIGKLSHSNPTILFDYILSQIQKYDNLITPVVDSLKYLTSLNYDVLAYCIIEALANPEKERMKHDDTTISSWLQSLASFCGAVFRKYPIDLAGLLQYVANQLKAGKSFDLLILKEVVQKMAGIEITEEMTMEQLEAMTGGEQLKAEGGYFGQIRNTKKSSQRLKDALLDHDLALPLCLLMAQQRNGVIFQEGGEKHLKLVGKLYDQCHDTLVQFGGFLASNLSTEDYIKRVPSIDVLCNEFHTPHDAAFFLSRPMYAHHISSKYDELKKSEKGSKQQHKVHKYITSCEMVMAPVHEAVVSLHVSKVWDDISPQFYATFWSLTMYDLAVPHTSYEREVNKLKVQMKAIDDNQEMPPNKKKKEKERCTALQDKLLEEEKKQMEHVQRVLQRLKLEKDNWLLAKSTKNETITKFLQLCIFPRCIFSAIDAVYCARFVELVHQQKTPNFSTLLCYDRVFSDIIYTVASCTENEASRYGRFLCCMLETVTRWHSDRATYEKECGNYPGFLTILRATGFDGGNKADQLDYENFRHVVHKWHYKLTKASVHCLETGEYTHIRNILIVLTKILPWYPKVLNLGQALERRVNKICQEEKEKRPDLYALAMGYSGQLKSRKSHMIPENEFHHKDPPPRNAVASVQNGPGGGTSSSSIGNASKSDESGAEETDKSRERSQCGTKAVNKASSTTPKGNSSNGNSGSNSNKAVKENDKEKVKEKEKEKKEKTPATTPEARALGKDSKEKPKEERPNKEDKARETKERTPKSDKEKEKFKKEEKAKDEKFKTTVPIVESKSTQEREREKEPSRERDVAKEMKSKENVKGGEKTPVSGSLKSPVPRSDISEPDREQKRRKIDSHPSPSHSSTVKDSLIDLKDSSAKLYINHNPPPLSKSKEREMDKKDLDKSRERSREREKKDEKDRKERKRDHSNNDREVPPDITKRRKEENGTMGVSKHKSESPCESQYPNEKDKEKNKSKSSGKEKSSSDSFKSEKMDKISSGGKKESRHDKEKIEKKEKRDSSGGKEEKKHHKSSDKHR</sequence>
<reference key="1">
    <citation type="journal article" date="2009" name="PLoS Biol.">
        <title>Lineage-specific biology revealed by a finished genome assembly of the mouse.</title>
        <authorList>
            <person name="Church D.M."/>
            <person name="Goodstadt L."/>
            <person name="Hillier L.W."/>
            <person name="Zody M.C."/>
            <person name="Goldstein S."/>
            <person name="She X."/>
            <person name="Bult C.J."/>
            <person name="Agarwala R."/>
            <person name="Cherry J.L."/>
            <person name="DiCuccio M."/>
            <person name="Hlavina W."/>
            <person name="Kapustin Y."/>
            <person name="Meric P."/>
            <person name="Maglott D."/>
            <person name="Birtle Z."/>
            <person name="Marques A.C."/>
            <person name="Graves T."/>
            <person name="Zhou S."/>
            <person name="Teague B."/>
            <person name="Potamousis K."/>
            <person name="Churas C."/>
            <person name="Place M."/>
            <person name="Herschleb J."/>
            <person name="Runnheim R."/>
            <person name="Forrest D."/>
            <person name="Amos-Landgraf J."/>
            <person name="Schwartz D.C."/>
            <person name="Cheng Z."/>
            <person name="Lindblad-Toh K."/>
            <person name="Eichler E.E."/>
            <person name="Ponting C.P."/>
        </authorList>
    </citation>
    <scope>NUCLEOTIDE SEQUENCE [LARGE SCALE GENOMIC DNA]</scope>
    <source>
        <strain>C57BL/6J</strain>
    </source>
</reference>
<reference key="2">
    <citation type="journal article" date="2007" name="Proc. Natl. Acad. Sci. U.S.A.">
        <title>Large-scale phosphorylation analysis of mouse liver.</title>
        <authorList>
            <person name="Villen J."/>
            <person name="Beausoleil S.A."/>
            <person name="Gerber S.A."/>
            <person name="Gygi S.P."/>
        </authorList>
    </citation>
    <scope>IDENTIFICATION BY MASS SPECTROMETRY [LARGE SCALE ANALYSIS]</scope>
    <source>
        <tissue>Liver</tissue>
    </source>
</reference>
<reference key="3">
    <citation type="journal article" date="2010" name="Cell">
        <title>A tissue-specific atlas of mouse protein phosphorylation and expression.</title>
        <authorList>
            <person name="Huttlin E.L."/>
            <person name="Jedrychowski M.P."/>
            <person name="Elias J.E."/>
            <person name="Goswami T."/>
            <person name="Rad R."/>
            <person name="Beausoleil S.A."/>
            <person name="Villen J."/>
            <person name="Haas W."/>
            <person name="Sowa M.E."/>
            <person name="Gygi S.P."/>
        </authorList>
    </citation>
    <scope>PHOSPHORYLATION [LARGE SCALE ANALYSIS] AT SER-1222; SER-1393 AND SER-1417</scope>
    <scope>IDENTIFICATION BY MASS SPECTROMETRY [LARGE SCALE ANALYSIS]</scope>
    <source>
        <tissue>Brown adipose tissue</tissue>
        <tissue>Kidney</tissue>
        <tissue>Lung</tissue>
        <tissue>Spleen</tissue>
        <tissue>Testis</tissue>
    </source>
</reference>
<reference key="4">
    <citation type="journal article" date="2015" name="Am. J. Hum. Genet.">
        <title>THOC2 mutations implicate mRNA-export pathway in X-linked intellectual disability.</title>
        <authorList>
            <person name="Kumar R."/>
            <person name="Corbett M.A."/>
            <person name="van Bon B.W."/>
            <person name="Woenig J.A."/>
            <person name="Weir L."/>
            <person name="Douglas E."/>
            <person name="Friend K.L."/>
            <person name="Gardner A."/>
            <person name="Shaw M."/>
            <person name="Jolly L.A."/>
            <person name="Tan C."/>
            <person name="Hunter M.F."/>
            <person name="Hackett A."/>
            <person name="Field M."/>
            <person name="Palmer E.E."/>
            <person name="Leffler M."/>
            <person name="Rogers C."/>
            <person name="Boyle J."/>
            <person name="Bienek M."/>
            <person name="Jensen C."/>
            <person name="Van Buggenhout G."/>
            <person name="Van Esch H."/>
            <person name="Hoffmann K."/>
            <person name="Raynaud M."/>
            <person name="Zhao H."/>
            <person name="Reed R."/>
            <person name="Hu H."/>
            <person name="Haas S.A."/>
            <person name="Haan E."/>
            <person name="Kalscheuer V.M."/>
            <person name="Gecz J."/>
        </authorList>
    </citation>
    <scope>TISSUE SPECIFICITY</scope>
</reference>
<reference key="5">
    <citation type="journal article" date="2023" name="Proc. Natl. Acad. Sci. U.S.A.">
        <title>Ablation of ZC3H11A causes early embryonic lethality and dysregulation of metabolic processes.</title>
        <authorList>
            <person name="Younis S."/>
            <person name="Jouneau A."/>
            <person name="Larsson M."/>
            <person name="Oudin J.F."/>
            <person name="Adenot P."/>
            <person name="Omar J."/>
            <person name="Brochard V."/>
            <person name="Andersson L."/>
        </authorList>
    </citation>
    <scope>INTERACTION WITH ZC3H11A</scope>
</reference>
<feature type="chain" id="PRO_0000384399" description="THO complex subunit 2">
    <location>
        <begin position="1"/>
        <end position="1594"/>
    </location>
</feature>
<feature type="region of interest" description="Anchor domain; interaction with THOC5 and THOC7" evidence="1">
    <location>
        <begin position="1"/>
        <end position="163"/>
    </location>
</feature>
<feature type="region of interest" description="Bow domain; interaction with THOC1 dock domain and THOC3" evidence="1">
    <location>
        <begin position="164"/>
        <end position="534"/>
    </location>
</feature>
<feature type="region of interest" description="MIF4G domain; interaction with THOC3 and DDX39B" evidence="1">
    <location>
        <begin position="535"/>
        <end position="686"/>
    </location>
</feature>
<feature type="region of interest" description="Stern domain" evidence="1">
    <location>
        <begin position="687"/>
        <end position="1174"/>
    </location>
</feature>
<feature type="region of interest" description="Charged domain" evidence="1">
    <location>
        <begin position="1175"/>
        <end position="1594"/>
    </location>
</feature>
<feature type="region of interest" description="Disordered" evidence="3">
    <location>
        <begin position="1183"/>
        <end position="1594"/>
    </location>
</feature>
<feature type="coiled-coil region" evidence="2">
    <location>
        <begin position="896"/>
        <end position="965"/>
    </location>
</feature>
<feature type="coiled-coil region" evidence="2">
    <location>
        <begin position="1464"/>
        <end position="1491"/>
    </location>
</feature>
<feature type="short sequence motif" description="Nuclear localization signal" evidence="2">
    <location>
        <begin position="923"/>
        <end position="928"/>
    </location>
</feature>
<feature type="compositionally biased region" description="Basic and acidic residues" evidence="3">
    <location>
        <begin position="1183"/>
        <end position="1192"/>
    </location>
</feature>
<feature type="compositionally biased region" description="Basic and acidic residues" evidence="3">
    <location>
        <begin position="1218"/>
        <end position="1234"/>
    </location>
</feature>
<feature type="compositionally biased region" description="Low complexity" evidence="3">
    <location>
        <begin position="1251"/>
        <end position="1264"/>
    </location>
</feature>
<feature type="compositionally biased region" description="Basic and acidic residues" evidence="3">
    <location>
        <begin position="1265"/>
        <end position="1285"/>
    </location>
</feature>
<feature type="compositionally biased region" description="Basic and acidic residues" evidence="3">
    <location>
        <begin position="1294"/>
        <end position="1343"/>
    </location>
</feature>
<feature type="compositionally biased region" description="Basic and acidic residues" evidence="3">
    <location>
        <begin position="1353"/>
        <end position="1383"/>
    </location>
</feature>
<feature type="compositionally biased region" description="Polar residues" evidence="3">
    <location>
        <begin position="1416"/>
        <end position="1425"/>
    </location>
</feature>
<feature type="compositionally biased region" description="Basic and acidic residues" evidence="3">
    <location>
        <begin position="1449"/>
        <end position="1504"/>
    </location>
</feature>
<feature type="compositionally biased region" description="Basic and acidic residues" evidence="3">
    <location>
        <begin position="1524"/>
        <end position="1583"/>
    </location>
</feature>
<feature type="compositionally biased region" description="Basic residues" evidence="3">
    <location>
        <begin position="1584"/>
        <end position="1594"/>
    </location>
</feature>
<feature type="modified residue" description="Phosphoserine" evidence="7">
    <location>
        <position position="1222"/>
    </location>
</feature>
<feature type="modified residue" description="Phosphothreonine" evidence="1">
    <location>
        <position position="1385"/>
    </location>
</feature>
<feature type="modified residue" description="Phosphoserine" evidence="1">
    <location>
        <position position="1390"/>
    </location>
</feature>
<feature type="modified residue" description="Phosphoserine" evidence="7">
    <location>
        <position position="1393"/>
    </location>
</feature>
<feature type="modified residue" description="Phosphoserine" evidence="7">
    <location>
        <position position="1417"/>
    </location>
</feature>
<feature type="modified residue" description="Phosphoserine" evidence="1">
    <location>
        <position position="1450"/>
    </location>
</feature>
<feature type="modified residue" description="Phosphoserine" evidence="1">
    <location>
        <position position="1486"/>
    </location>
</feature>
<feature type="modified residue" description="Phosphoserine" evidence="1">
    <location>
        <position position="1516"/>
    </location>
</feature>
<comment type="function">
    <text evidence="1">Component of the THO subcomplex of the TREX complex which is thought to couple mRNA transcription, processing and nuclear export, and which specifically associates with spliced mRNA and not with unspliced pre-mRNA. Required for efficient export of polyadenylated RNA and spliced mRNA. The THOC1-THOC2-THOC3 core complex alone is sufficient to bind export factor NXF1-NXT1 and promote ATPase activity of DDX39B; in the complex THOC2 is the only component that directly interacts with DDX39B. TREX is recruited to spliced mRNAs by a transcription-independent mechanism, binds to mRNA upstream of the exon-junction complex (EJC) and is recruited in a splicing- and cap-dependent manner to a region near the 5' end of the mRNA where it functions in mRNA export to the cytoplasm via the TAP/NXF1 pathway. Required for NXF1 localization to the nuclear rim. THOC2 (and probably the THO complex) is involved in releasing mRNA from nuclear speckle domains. Plays a role for proper neuronal development.</text>
</comment>
<comment type="subunit">
    <text evidence="1 5">Component of the THO subcomplex, which is composed of THOC1, THOC2, THOC3, THOC5, THOC6 and THOC7. The THO subcomplex interacts with DDX39B to form the THO-DDX39B complex which multimerizes into a 28-subunit tetrameric assembly. Component of the transcription/export (TREX) complex at least composed of ALYREF/THOC4, DDX39B, SARNP/CIP29, CHTOP and the THO subcomplex; in the complex interacts with THOC1, THOC3, THOC5, THOC7 and DDX39B. TREX seems to have a dynamic structure involving ATP-dependent remodeling. Interacts with POLDIP3 (By similarity). Interacts with ZC3H11A (PubMed:37252988).</text>
</comment>
<comment type="subcellular location">
    <subcellularLocation>
        <location evidence="1">Nucleus</location>
    </subcellularLocation>
    <subcellularLocation>
        <location evidence="1">Nucleus speckle</location>
    </subcellularLocation>
    <subcellularLocation>
        <location evidence="1">Cytoplasm</location>
    </subcellularLocation>
</comment>
<comment type="tissue specificity">
    <text evidence="4">Expressed in the hippocampus and the cortical neurons.</text>
</comment>
<comment type="similarity">
    <text evidence="6">Belongs to the THOC2 family.</text>
</comment>
<dbReference type="EMBL" id="AL954355">
    <property type="status" value="NOT_ANNOTATED_CDS"/>
    <property type="molecule type" value="Genomic_DNA"/>
</dbReference>
<dbReference type="EMBL" id="BX005253">
    <property type="status" value="NOT_ANNOTATED_CDS"/>
    <property type="molecule type" value="Genomic_DNA"/>
</dbReference>
<dbReference type="CCDS" id="CCDS40951.1"/>
<dbReference type="RefSeq" id="NP_001028594.1">
    <property type="nucleotide sequence ID" value="NM_001033422.1"/>
</dbReference>
<dbReference type="SMR" id="B1AZI6"/>
<dbReference type="BioGRID" id="237091">
    <property type="interactions" value="28"/>
</dbReference>
<dbReference type="FunCoup" id="B1AZI6">
    <property type="interactions" value="4702"/>
</dbReference>
<dbReference type="IntAct" id="B1AZI6">
    <property type="interactions" value="1"/>
</dbReference>
<dbReference type="STRING" id="10090.ENSMUSP00000044677"/>
<dbReference type="GlyGen" id="B1AZI6">
    <property type="glycosylation" value="2 sites, 1 N-linked glycan (1 site), 1 O-linked glycan (1 site)"/>
</dbReference>
<dbReference type="iPTMnet" id="B1AZI6"/>
<dbReference type="PhosphoSitePlus" id="B1AZI6"/>
<dbReference type="SwissPalm" id="B1AZI6"/>
<dbReference type="jPOST" id="B1AZI6"/>
<dbReference type="PaxDb" id="10090-ENSMUSP00000044677"/>
<dbReference type="PeptideAtlas" id="B1AZI6"/>
<dbReference type="ProteomicsDB" id="259385"/>
<dbReference type="Pumba" id="B1AZI6"/>
<dbReference type="Ensembl" id="ENSMUST00000047037.15">
    <property type="protein sequence ID" value="ENSMUSP00000044677.9"/>
    <property type="gene ID" value="ENSMUSG00000037475.16"/>
</dbReference>
<dbReference type="GeneID" id="331401"/>
<dbReference type="KEGG" id="mmu:331401"/>
<dbReference type="UCSC" id="uc009tao.1">
    <property type="organism name" value="mouse"/>
</dbReference>
<dbReference type="AGR" id="MGI:2442413"/>
<dbReference type="CTD" id="57187"/>
<dbReference type="MGI" id="MGI:2442413">
    <property type="gene designation" value="Thoc2"/>
</dbReference>
<dbReference type="VEuPathDB" id="HostDB:ENSMUSG00000037475"/>
<dbReference type="eggNOG" id="KOG1874">
    <property type="taxonomic scope" value="Eukaryota"/>
</dbReference>
<dbReference type="GeneTree" id="ENSGT00710000106792"/>
<dbReference type="HOGENOM" id="CLU_000511_5_0_1"/>
<dbReference type="InParanoid" id="B1AZI6"/>
<dbReference type="OMA" id="QERWTCI"/>
<dbReference type="OrthoDB" id="29024at2759"/>
<dbReference type="PhylomeDB" id="B1AZI6"/>
<dbReference type="TreeFam" id="TF313127"/>
<dbReference type="Reactome" id="R-MMU-159236">
    <property type="pathway name" value="Transport of Mature mRNA derived from an Intron-Containing Transcript"/>
</dbReference>
<dbReference type="Reactome" id="R-MMU-72187">
    <property type="pathway name" value="mRNA 3'-end processing"/>
</dbReference>
<dbReference type="Reactome" id="R-MMU-73856">
    <property type="pathway name" value="RNA Polymerase II Transcription Termination"/>
</dbReference>
<dbReference type="BioGRID-ORCS" id="331401">
    <property type="hits" value="27 hits in 82 CRISPR screens"/>
</dbReference>
<dbReference type="ChiTaRS" id="Thoc2">
    <property type="organism name" value="mouse"/>
</dbReference>
<dbReference type="PRO" id="PR:B1AZI6"/>
<dbReference type="Proteomes" id="UP000000589">
    <property type="component" value="Chromosome X"/>
</dbReference>
<dbReference type="RNAct" id="B1AZI6">
    <property type="molecule type" value="protein"/>
</dbReference>
<dbReference type="Bgee" id="ENSMUSG00000037475">
    <property type="expression patterns" value="Expressed in rostral migratory stream and 256 other cell types or tissues"/>
</dbReference>
<dbReference type="ExpressionAtlas" id="B1AZI6">
    <property type="expression patterns" value="baseline and differential"/>
</dbReference>
<dbReference type="GO" id="GO:0000781">
    <property type="term" value="C:chromosome, telomeric region"/>
    <property type="evidence" value="ECO:0007669"/>
    <property type="project" value="Ensembl"/>
</dbReference>
<dbReference type="GO" id="GO:0005737">
    <property type="term" value="C:cytoplasm"/>
    <property type="evidence" value="ECO:0000250"/>
    <property type="project" value="UniProtKB"/>
</dbReference>
<dbReference type="GO" id="GO:0016607">
    <property type="term" value="C:nuclear speck"/>
    <property type="evidence" value="ECO:0007669"/>
    <property type="project" value="UniProtKB-SubCell"/>
</dbReference>
<dbReference type="GO" id="GO:0005634">
    <property type="term" value="C:nucleus"/>
    <property type="evidence" value="ECO:0000314"/>
    <property type="project" value="MGI"/>
</dbReference>
<dbReference type="GO" id="GO:0000445">
    <property type="term" value="C:THO complex part of transcription export complex"/>
    <property type="evidence" value="ECO:0007669"/>
    <property type="project" value="Ensembl"/>
</dbReference>
<dbReference type="GO" id="GO:0003729">
    <property type="term" value="F:mRNA binding"/>
    <property type="evidence" value="ECO:0000315"/>
    <property type="project" value="MGI"/>
</dbReference>
<dbReference type="GO" id="GO:0001824">
    <property type="term" value="P:blastocyst development"/>
    <property type="evidence" value="ECO:0000315"/>
    <property type="project" value="MGI"/>
</dbReference>
<dbReference type="GO" id="GO:0000902">
    <property type="term" value="P:cell morphogenesis"/>
    <property type="evidence" value="ECO:0000315"/>
    <property type="project" value="MGI"/>
</dbReference>
<dbReference type="GO" id="GO:0048699">
    <property type="term" value="P:generation of neurons"/>
    <property type="evidence" value="ECO:0000250"/>
    <property type="project" value="UniProtKB"/>
</dbReference>
<dbReference type="GO" id="GO:0006397">
    <property type="term" value="P:mRNA processing"/>
    <property type="evidence" value="ECO:0007669"/>
    <property type="project" value="UniProtKB-KW"/>
</dbReference>
<dbReference type="GO" id="GO:0010977">
    <property type="term" value="P:negative regulation of neuron projection development"/>
    <property type="evidence" value="ECO:0007669"/>
    <property type="project" value="Ensembl"/>
</dbReference>
<dbReference type="GO" id="GO:0048666">
    <property type="term" value="P:neuron development"/>
    <property type="evidence" value="ECO:0000250"/>
    <property type="project" value="UniProtKB"/>
</dbReference>
<dbReference type="GO" id="GO:0016973">
    <property type="term" value="P:poly(A)+ mRNA export from nucleus"/>
    <property type="evidence" value="ECO:0007669"/>
    <property type="project" value="Ensembl"/>
</dbReference>
<dbReference type="GO" id="GO:0010468">
    <property type="term" value="P:regulation of gene expression"/>
    <property type="evidence" value="ECO:0000315"/>
    <property type="project" value="MGI"/>
</dbReference>
<dbReference type="GO" id="GO:0010793">
    <property type="term" value="P:regulation of mRNA export from nucleus"/>
    <property type="evidence" value="ECO:0000315"/>
    <property type="project" value="MGI"/>
</dbReference>
<dbReference type="GO" id="GO:0008380">
    <property type="term" value="P:RNA splicing"/>
    <property type="evidence" value="ECO:0007669"/>
    <property type="project" value="UniProtKB-KW"/>
</dbReference>
<dbReference type="GO" id="GO:0017145">
    <property type="term" value="P:stem cell division"/>
    <property type="evidence" value="ECO:0000315"/>
    <property type="project" value="MGI"/>
</dbReference>
<dbReference type="InterPro" id="IPR040007">
    <property type="entry name" value="Tho2"/>
</dbReference>
<dbReference type="InterPro" id="IPR021418">
    <property type="entry name" value="THO_THOC2_C"/>
</dbReference>
<dbReference type="InterPro" id="IPR021726">
    <property type="entry name" value="THO_THOC2_N"/>
</dbReference>
<dbReference type="InterPro" id="IPR032302">
    <property type="entry name" value="THOC2_N"/>
</dbReference>
<dbReference type="PANTHER" id="PTHR21597:SF1">
    <property type="entry name" value="THO COMPLEX SUBUNIT 2"/>
    <property type="match status" value="1"/>
</dbReference>
<dbReference type="PANTHER" id="PTHR21597">
    <property type="entry name" value="THO2 PROTEIN"/>
    <property type="match status" value="1"/>
</dbReference>
<dbReference type="Pfam" id="PF11262">
    <property type="entry name" value="Tho2"/>
    <property type="match status" value="1"/>
</dbReference>
<dbReference type="Pfam" id="PF11732">
    <property type="entry name" value="Thoc2"/>
    <property type="match status" value="1"/>
</dbReference>
<dbReference type="Pfam" id="PF16134">
    <property type="entry name" value="THOC2_N"/>
    <property type="match status" value="2"/>
</dbReference>
<protein>
    <recommendedName>
        <fullName>THO complex subunit 2</fullName>
        <shortName>Tho2</shortName>
    </recommendedName>
</protein>
<proteinExistence type="evidence at protein level"/>